<evidence type="ECO:0000255" key="1">
    <source>
        <dbReference type="HAMAP-Rule" id="MF_00149"/>
    </source>
</evidence>
<protein>
    <recommendedName>
        <fullName evidence="1">DNA mismatch repair protein MutL</fullName>
    </recommendedName>
</protein>
<dbReference type="EMBL" id="BA000012">
    <property type="protein sequence ID" value="BAB53869.1"/>
    <property type="molecule type" value="Genomic_DNA"/>
</dbReference>
<dbReference type="RefSeq" id="WP_010915495.1">
    <property type="nucleotide sequence ID" value="NC_002678.2"/>
</dbReference>
<dbReference type="SMR" id="Q983L2"/>
<dbReference type="KEGG" id="mlo:mll8278"/>
<dbReference type="PATRIC" id="fig|266835.9.peg.6614"/>
<dbReference type="eggNOG" id="COG0323">
    <property type="taxonomic scope" value="Bacteria"/>
</dbReference>
<dbReference type="HOGENOM" id="CLU_004131_4_2_5"/>
<dbReference type="Proteomes" id="UP000000552">
    <property type="component" value="Chromosome"/>
</dbReference>
<dbReference type="GO" id="GO:0032300">
    <property type="term" value="C:mismatch repair complex"/>
    <property type="evidence" value="ECO:0007669"/>
    <property type="project" value="InterPro"/>
</dbReference>
<dbReference type="GO" id="GO:0005524">
    <property type="term" value="F:ATP binding"/>
    <property type="evidence" value="ECO:0007669"/>
    <property type="project" value="InterPro"/>
</dbReference>
<dbReference type="GO" id="GO:0016887">
    <property type="term" value="F:ATP hydrolysis activity"/>
    <property type="evidence" value="ECO:0007669"/>
    <property type="project" value="InterPro"/>
</dbReference>
<dbReference type="GO" id="GO:0140664">
    <property type="term" value="F:ATP-dependent DNA damage sensor activity"/>
    <property type="evidence" value="ECO:0007669"/>
    <property type="project" value="InterPro"/>
</dbReference>
<dbReference type="GO" id="GO:0030983">
    <property type="term" value="F:mismatched DNA binding"/>
    <property type="evidence" value="ECO:0007669"/>
    <property type="project" value="InterPro"/>
</dbReference>
<dbReference type="GO" id="GO:0006298">
    <property type="term" value="P:mismatch repair"/>
    <property type="evidence" value="ECO:0007669"/>
    <property type="project" value="UniProtKB-UniRule"/>
</dbReference>
<dbReference type="CDD" id="cd16926">
    <property type="entry name" value="HATPase_MutL-MLH-PMS-like"/>
    <property type="match status" value="1"/>
</dbReference>
<dbReference type="CDD" id="cd03482">
    <property type="entry name" value="MutL_Trans_MutL"/>
    <property type="match status" value="1"/>
</dbReference>
<dbReference type="FunFam" id="3.30.565.10:FF:000003">
    <property type="entry name" value="DNA mismatch repair endonuclease MutL"/>
    <property type="match status" value="1"/>
</dbReference>
<dbReference type="Gene3D" id="3.30.230.10">
    <property type="match status" value="1"/>
</dbReference>
<dbReference type="Gene3D" id="3.30.565.10">
    <property type="entry name" value="Histidine kinase-like ATPase, C-terminal domain"/>
    <property type="match status" value="1"/>
</dbReference>
<dbReference type="Gene3D" id="3.30.1540.20">
    <property type="entry name" value="MutL, C-terminal domain, dimerisation subdomain"/>
    <property type="match status" value="1"/>
</dbReference>
<dbReference type="Gene3D" id="3.30.1370.100">
    <property type="entry name" value="MutL, C-terminal domain, regulatory subdomain"/>
    <property type="match status" value="1"/>
</dbReference>
<dbReference type="HAMAP" id="MF_00149">
    <property type="entry name" value="DNA_mis_repair"/>
    <property type="match status" value="1"/>
</dbReference>
<dbReference type="InterPro" id="IPR014762">
    <property type="entry name" value="DNA_mismatch_repair_CS"/>
</dbReference>
<dbReference type="InterPro" id="IPR020667">
    <property type="entry name" value="DNA_mismatch_repair_MutL"/>
</dbReference>
<dbReference type="InterPro" id="IPR013507">
    <property type="entry name" value="DNA_mismatch_S5_2-like"/>
</dbReference>
<dbReference type="InterPro" id="IPR036890">
    <property type="entry name" value="HATPase_C_sf"/>
</dbReference>
<dbReference type="InterPro" id="IPR002099">
    <property type="entry name" value="MutL/Mlh/PMS"/>
</dbReference>
<dbReference type="InterPro" id="IPR038973">
    <property type="entry name" value="MutL/Mlh/Pms-like"/>
</dbReference>
<dbReference type="InterPro" id="IPR014790">
    <property type="entry name" value="MutL_C"/>
</dbReference>
<dbReference type="InterPro" id="IPR042120">
    <property type="entry name" value="MutL_C_dimsub"/>
</dbReference>
<dbReference type="InterPro" id="IPR042121">
    <property type="entry name" value="MutL_C_regsub"/>
</dbReference>
<dbReference type="InterPro" id="IPR037198">
    <property type="entry name" value="MutL_C_sf"/>
</dbReference>
<dbReference type="InterPro" id="IPR020568">
    <property type="entry name" value="Ribosomal_Su5_D2-typ_SF"/>
</dbReference>
<dbReference type="InterPro" id="IPR014721">
    <property type="entry name" value="Ribsml_uS5_D2-typ_fold_subgr"/>
</dbReference>
<dbReference type="NCBIfam" id="TIGR00585">
    <property type="entry name" value="mutl"/>
    <property type="match status" value="1"/>
</dbReference>
<dbReference type="NCBIfam" id="NF000953">
    <property type="entry name" value="PRK00095.2-4"/>
    <property type="match status" value="1"/>
</dbReference>
<dbReference type="PANTHER" id="PTHR10073">
    <property type="entry name" value="DNA MISMATCH REPAIR PROTEIN MLH, PMS, MUTL"/>
    <property type="match status" value="1"/>
</dbReference>
<dbReference type="PANTHER" id="PTHR10073:SF12">
    <property type="entry name" value="DNA MISMATCH REPAIR PROTEIN MLH1"/>
    <property type="match status" value="1"/>
</dbReference>
<dbReference type="Pfam" id="PF01119">
    <property type="entry name" value="DNA_mis_repair"/>
    <property type="match status" value="1"/>
</dbReference>
<dbReference type="Pfam" id="PF13589">
    <property type="entry name" value="HATPase_c_3"/>
    <property type="match status" value="1"/>
</dbReference>
<dbReference type="Pfam" id="PF08676">
    <property type="entry name" value="MutL_C"/>
    <property type="match status" value="1"/>
</dbReference>
<dbReference type="SMART" id="SM01340">
    <property type="entry name" value="DNA_mis_repair"/>
    <property type="match status" value="1"/>
</dbReference>
<dbReference type="SMART" id="SM00853">
    <property type="entry name" value="MutL_C"/>
    <property type="match status" value="1"/>
</dbReference>
<dbReference type="SUPFAM" id="SSF55874">
    <property type="entry name" value="ATPase domain of HSP90 chaperone/DNA topoisomerase II/histidine kinase"/>
    <property type="match status" value="1"/>
</dbReference>
<dbReference type="SUPFAM" id="SSF118116">
    <property type="entry name" value="DNA mismatch repair protein MutL"/>
    <property type="match status" value="1"/>
</dbReference>
<dbReference type="SUPFAM" id="SSF54211">
    <property type="entry name" value="Ribosomal protein S5 domain 2-like"/>
    <property type="match status" value="1"/>
</dbReference>
<dbReference type="PROSITE" id="PS00058">
    <property type="entry name" value="DNA_MISMATCH_REPAIR_1"/>
    <property type="match status" value="1"/>
</dbReference>
<name>MUTL_RHILO</name>
<gene>
    <name evidence="1" type="primary">mutL</name>
    <name type="ordered locus">mll8278</name>
</gene>
<feature type="chain" id="PRO_0000177962" description="DNA mismatch repair protein MutL">
    <location>
        <begin position="1"/>
        <end position="627"/>
    </location>
</feature>
<proteinExistence type="inferred from homology"/>
<comment type="function">
    <text evidence="1">This protein is involved in the repair of mismatches in DNA. It is required for dam-dependent methyl-directed DNA mismatch repair. May act as a 'molecular matchmaker', a protein that promotes the formation of a stable complex between two or more DNA-binding proteins in an ATP-dependent manner without itself being part of a final effector complex.</text>
</comment>
<comment type="similarity">
    <text evidence="1">Belongs to the DNA mismatch repair MutL/HexB family.</text>
</comment>
<sequence length="627" mass="66954">MPIRQLSETMINQIAAGEVIERPASVVKELVENALDAGASRVEVVTAGGGLNLIRVTDDGSGIPEPELALAIARHCTSKLAEDINDIRSLGFRGEALPSIGSVSRLSIRSRTALGDSAAEIGIEGGRVLPVRPAAANRGTTVEVRDLFFATPARLKFMKGERAESSATSDVVKRIAIAFPAVRFTLAGSDRSTLELPATDDSPEGSLRRVAQVMGAEFPDNSIAIDAMREGVHLTGHVSIPSFSRANALQQYAYVNGRPVRDKLIAGAIRGAFADVLPRDRHAVTVLFLTLDPAIVDVNVHPAKADVRFRDPGLVRGLIVGAIRQALADAGIRSATTGAAGMMAAFRPGAASYNHGGPANGHRSYEAAYRASGSAGFDPARSPQRPLDMQFGDFERAGARHGGFSEPGQAAFDTGPLVSADARVGQNETTETLLGTVLGAARAQVHENYIVAQTRDSLVIVDQHAAHERLVYEALKNALHSRPVPSQMLLLPEIIDLPEEDAERLAMHSETLARFGLGIERFGPGAVAVRETPSMLGETNVQQLVRDLADEIADNDTVETLKERLDKIAATMACHGSVRSGRLLKAEEMNALLRQMEATPGSGTCNHGRPTYIELKLADIERLFGRR</sequence>
<reference key="1">
    <citation type="journal article" date="2000" name="DNA Res.">
        <title>Complete genome structure of the nitrogen-fixing symbiotic bacterium Mesorhizobium loti.</title>
        <authorList>
            <person name="Kaneko T."/>
            <person name="Nakamura Y."/>
            <person name="Sato S."/>
            <person name="Asamizu E."/>
            <person name="Kato T."/>
            <person name="Sasamoto S."/>
            <person name="Watanabe A."/>
            <person name="Idesawa K."/>
            <person name="Ishikawa A."/>
            <person name="Kawashima K."/>
            <person name="Kimura T."/>
            <person name="Kishida Y."/>
            <person name="Kiyokawa C."/>
            <person name="Kohara M."/>
            <person name="Matsumoto M."/>
            <person name="Matsuno A."/>
            <person name="Mochizuki Y."/>
            <person name="Nakayama S."/>
            <person name="Nakazaki N."/>
            <person name="Shimpo S."/>
            <person name="Sugimoto M."/>
            <person name="Takeuchi C."/>
            <person name="Yamada M."/>
            <person name="Tabata S."/>
        </authorList>
    </citation>
    <scope>NUCLEOTIDE SEQUENCE [LARGE SCALE GENOMIC DNA]</scope>
    <source>
        <strain>LMG 29417 / CECT 9101 / MAFF 303099</strain>
    </source>
</reference>
<keyword id="KW-0227">DNA damage</keyword>
<keyword id="KW-0234">DNA repair</keyword>
<organism>
    <name type="scientific">Mesorhizobium japonicum (strain LMG 29417 / CECT 9101 / MAFF 303099)</name>
    <name type="common">Mesorhizobium loti (strain MAFF 303099)</name>
    <dbReference type="NCBI Taxonomy" id="266835"/>
    <lineage>
        <taxon>Bacteria</taxon>
        <taxon>Pseudomonadati</taxon>
        <taxon>Pseudomonadota</taxon>
        <taxon>Alphaproteobacteria</taxon>
        <taxon>Hyphomicrobiales</taxon>
        <taxon>Phyllobacteriaceae</taxon>
        <taxon>Mesorhizobium</taxon>
    </lineage>
</organism>
<accession>Q983L2</accession>